<comment type="function">
    <text evidence="1">Probably functions as a manganese efflux pump.</text>
</comment>
<comment type="subcellular location">
    <subcellularLocation>
        <location evidence="1">Cell inner membrane</location>
        <topology evidence="1">Multi-pass membrane protein</topology>
    </subcellularLocation>
</comment>
<comment type="similarity">
    <text evidence="1">Belongs to the MntP (TC 9.B.29) family.</text>
</comment>
<proteinExistence type="inferred from homology"/>
<organism>
    <name type="scientific">Campylobacter jejuni subsp. jejuni serotype O:2 (strain ATCC 700819 / NCTC 11168)</name>
    <dbReference type="NCBI Taxonomy" id="192222"/>
    <lineage>
        <taxon>Bacteria</taxon>
        <taxon>Pseudomonadati</taxon>
        <taxon>Campylobacterota</taxon>
        <taxon>Epsilonproteobacteria</taxon>
        <taxon>Campylobacterales</taxon>
        <taxon>Campylobacteraceae</taxon>
        <taxon>Campylobacter</taxon>
    </lineage>
</organism>
<sequence>MDFYSLIFLSCALGMDAFAVSLCKGFSVKKLHLKHYLIVGIYFGGFQALMPTIGYFIGITFASFIASIDHWIAFILLSLIGLKMIKESLENENCDSNANQFGFKTMLALAIATSIDALAVGVSFAFLNVNLLLAIFLIGIITFILCIIALKIGNKFGIYLKNKAELLGGLVLIILGVKILIEHLFFD</sequence>
<evidence type="ECO:0000255" key="1">
    <source>
        <dbReference type="HAMAP-Rule" id="MF_01521"/>
    </source>
</evidence>
<dbReference type="EMBL" id="AL111168">
    <property type="protein sequence ID" value="CAL34337.1"/>
    <property type="molecule type" value="Genomic_DNA"/>
</dbReference>
<dbReference type="PIR" id="F81434">
    <property type="entry name" value="F81434"/>
</dbReference>
<dbReference type="RefSeq" id="WP_002851996.1">
    <property type="nucleotide sequence ID" value="NZ_SZUC01000006.1"/>
</dbReference>
<dbReference type="RefSeq" id="YP_002343626.1">
    <property type="nucleotide sequence ID" value="NC_002163.1"/>
</dbReference>
<dbReference type="SMR" id="Q9PIW1"/>
<dbReference type="IntAct" id="Q9PIW1">
    <property type="interactions" value="5"/>
</dbReference>
<dbReference type="STRING" id="192222.Cj0167c"/>
<dbReference type="PaxDb" id="192222-Cj0167c"/>
<dbReference type="EnsemblBacteria" id="CAL34337">
    <property type="protein sequence ID" value="CAL34337"/>
    <property type="gene ID" value="Cj0167c"/>
</dbReference>
<dbReference type="GeneID" id="904504"/>
<dbReference type="KEGG" id="cje:Cj0167c"/>
<dbReference type="PATRIC" id="fig|192222.6.peg.164"/>
<dbReference type="eggNOG" id="COG1971">
    <property type="taxonomic scope" value="Bacteria"/>
</dbReference>
<dbReference type="HOGENOM" id="CLU_096410_3_0_7"/>
<dbReference type="OrthoDB" id="9811590at2"/>
<dbReference type="Proteomes" id="UP000000799">
    <property type="component" value="Chromosome"/>
</dbReference>
<dbReference type="GO" id="GO:0005886">
    <property type="term" value="C:plasma membrane"/>
    <property type="evidence" value="ECO:0007669"/>
    <property type="project" value="UniProtKB-SubCell"/>
</dbReference>
<dbReference type="GO" id="GO:0005384">
    <property type="term" value="F:manganese ion transmembrane transporter activity"/>
    <property type="evidence" value="ECO:0007669"/>
    <property type="project" value="UniProtKB-UniRule"/>
</dbReference>
<dbReference type="HAMAP" id="MF_01521">
    <property type="entry name" value="MntP_pump"/>
    <property type="match status" value="1"/>
</dbReference>
<dbReference type="InterPro" id="IPR003810">
    <property type="entry name" value="Mntp/YtaF"/>
</dbReference>
<dbReference type="InterPro" id="IPR022929">
    <property type="entry name" value="Put_MntP"/>
</dbReference>
<dbReference type="PANTHER" id="PTHR35529">
    <property type="entry name" value="MANGANESE EFFLUX PUMP MNTP-RELATED"/>
    <property type="match status" value="1"/>
</dbReference>
<dbReference type="PANTHER" id="PTHR35529:SF1">
    <property type="entry name" value="MANGANESE EFFLUX PUMP MNTP-RELATED"/>
    <property type="match status" value="1"/>
</dbReference>
<dbReference type="Pfam" id="PF02659">
    <property type="entry name" value="Mntp"/>
    <property type="match status" value="1"/>
</dbReference>
<accession>Q9PIW1</accession>
<accession>Q0PBX1</accession>
<reference key="1">
    <citation type="journal article" date="2000" name="Nature">
        <title>The genome sequence of the food-borne pathogen Campylobacter jejuni reveals hypervariable sequences.</title>
        <authorList>
            <person name="Parkhill J."/>
            <person name="Wren B.W."/>
            <person name="Mungall K.L."/>
            <person name="Ketley J.M."/>
            <person name="Churcher C.M."/>
            <person name="Basham D."/>
            <person name="Chillingworth T."/>
            <person name="Davies R.M."/>
            <person name="Feltwell T."/>
            <person name="Holroyd S."/>
            <person name="Jagels K."/>
            <person name="Karlyshev A.V."/>
            <person name="Moule S."/>
            <person name="Pallen M.J."/>
            <person name="Penn C.W."/>
            <person name="Quail M.A."/>
            <person name="Rajandream M.A."/>
            <person name="Rutherford K.M."/>
            <person name="van Vliet A.H.M."/>
            <person name="Whitehead S."/>
            <person name="Barrell B.G."/>
        </authorList>
    </citation>
    <scope>NUCLEOTIDE SEQUENCE [LARGE SCALE GENOMIC DNA]</scope>
    <source>
        <strain>ATCC 700819 / NCTC 11168</strain>
    </source>
</reference>
<feature type="chain" id="PRO_0000155640" description="Putative manganese efflux pump MntP">
    <location>
        <begin position="1"/>
        <end position="187"/>
    </location>
</feature>
<feature type="transmembrane region" description="Helical" evidence="1">
    <location>
        <begin position="3"/>
        <end position="23"/>
    </location>
</feature>
<feature type="transmembrane region" description="Helical" evidence="1">
    <location>
        <begin position="35"/>
        <end position="55"/>
    </location>
</feature>
<feature type="transmembrane region" description="Helical" evidence="1">
    <location>
        <begin position="56"/>
        <end position="76"/>
    </location>
</feature>
<feature type="transmembrane region" description="Helical" evidence="1">
    <location>
        <begin position="107"/>
        <end position="127"/>
    </location>
</feature>
<feature type="transmembrane region" description="Helical" evidence="1">
    <location>
        <begin position="129"/>
        <end position="149"/>
    </location>
</feature>
<feature type="transmembrane region" description="Helical" evidence="1">
    <location>
        <begin position="166"/>
        <end position="186"/>
    </location>
</feature>
<gene>
    <name evidence="1" type="primary">mntP</name>
    <name type="ordered locus">Cj0167c</name>
</gene>
<name>MNTP_CAMJE</name>
<protein>
    <recommendedName>
        <fullName evidence="1">Putative manganese efflux pump MntP</fullName>
    </recommendedName>
</protein>
<keyword id="KW-0997">Cell inner membrane</keyword>
<keyword id="KW-1003">Cell membrane</keyword>
<keyword id="KW-0406">Ion transport</keyword>
<keyword id="KW-0464">Manganese</keyword>
<keyword id="KW-0472">Membrane</keyword>
<keyword id="KW-1185">Reference proteome</keyword>
<keyword id="KW-0812">Transmembrane</keyword>
<keyword id="KW-1133">Transmembrane helix</keyword>
<keyword id="KW-0813">Transport</keyword>